<dbReference type="EMBL" id="X59720">
    <property type="protein sequence ID" value="CAC42952.1"/>
    <property type="molecule type" value="Genomic_DNA"/>
</dbReference>
<dbReference type="EMBL" id="AY558147">
    <property type="protein sequence ID" value="AAS56473.1"/>
    <property type="molecule type" value="Genomic_DNA"/>
</dbReference>
<dbReference type="PIR" id="S19396">
    <property type="entry name" value="S19396"/>
</dbReference>
<dbReference type="SMR" id="P37264"/>
<dbReference type="DIP" id="DIP-4649N"/>
<dbReference type="STRING" id="4932.YCL065W"/>
<dbReference type="PaxDb" id="4932-YCL065W"/>
<dbReference type="EnsemblFungi" id="YCL065W_mRNA">
    <property type="protein sequence ID" value="YCL065W"/>
    <property type="gene ID" value="YCL065W"/>
</dbReference>
<dbReference type="AGR" id="SGD:S000000570"/>
<dbReference type="SGD" id="S000000570">
    <property type="gene designation" value="YCL065W"/>
</dbReference>
<dbReference type="GeneTree" id="ENSGT00940000179575"/>
<dbReference type="HOGENOM" id="CLU_164955_0_0_1"/>
<dbReference type="GO" id="GO:0016020">
    <property type="term" value="C:membrane"/>
    <property type="evidence" value="ECO:0007669"/>
    <property type="project" value="UniProtKB-SubCell"/>
</dbReference>
<comment type="subcellular location">
    <subcellularLocation>
        <location evidence="2">Membrane</location>
        <topology evidence="2">Multi-pass membrane protein</topology>
    </subcellularLocation>
</comment>
<comment type="miscellaneous">
    <text evidence="2">Partially overlaps HMLALPHA1.</text>
</comment>
<comment type="caution">
    <text evidence="3">Product of a dubious gene prediction unlikely to encode a functional protein. Because of that it is not part of the S.cerevisiae S288c complete/reference proteome set.</text>
</comment>
<evidence type="ECO:0000255" key="1"/>
<evidence type="ECO:0000305" key="2"/>
<evidence type="ECO:0000305" key="3">
    <source>
    </source>
</evidence>
<name>YCG5_YEAST</name>
<gene>
    <name type="ordered locus">YCL065W</name>
    <name type="ORF">YCL65W</name>
</gene>
<accession>P37264</accession>
<accession>Q8NIN3</accession>
<proteinExistence type="uncertain"/>
<keyword id="KW-0472">Membrane</keyword>
<keyword id="KW-0812">Transmembrane</keyword>
<keyword id="KW-1133">Transmembrane helix</keyword>
<organism>
    <name type="scientific">Saccharomyces cerevisiae (strain ATCC 204508 / S288c)</name>
    <name type="common">Baker's yeast</name>
    <dbReference type="NCBI Taxonomy" id="559292"/>
    <lineage>
        <taxon>Eukaryota</taxon>
        <taxon>Fungi</taxon>
        <taxon>Dikarya</taxon>
        <taxon>Ascomycota</taxon>
        <taxon>Saccharomycotina</taxon>
        <taxon>Saccharomycetes</taxon>
        <taxon>Saccharomycetales</taxon>
        <taxon>Saccharomycetaceae</taxon>
        <taxon>Saccharomyces</taxon>
    </lineage>
</organism>
<reference key="1">
    <citation type="journal article" date="1992" name="Nature">
        <title>The complete DNA sequence of yeast chromosome III.</title>
        <authorList>
            <person name="Oliver S.G."/>
            <person name="van der Aart Q.J.M."/>
            <person name="Agostoni-Carbone M.L."/>
            <person name="Aigle M."/>
            <person name="Alberghina L."/>
            <person name="Alexandraki D."/>
            <person name="Antoine G."/>
            <person name="Anwar R."/>
            <person name="Ballesta J.P.G."/>
            <person name="Benit P."/>
            <person name="Berben G."/>
            <person name="Bergantino E."/>
            <person name="Biteau N."/>
            <person name="Bolle P.-A."/>
            <person name="Bolotin-Fukuhara M."/>
            <person name="Brown A."/>
            <person name="Brown A.J.P."/>
            <person name="Buhler J.-M."/>
            <person name="Carcano C."/>
            <person name="Carignani G."/>
            <person name="Cederberg H."/>
            <person name="Chanet R."/>
            <person name="Contreras R."/>
            <person name="Crouzet M."/>
            <person name="Daignan-Fornier B."/>
            <person name="Defoor E."/>
            <person name="Delgado M.D."/>
            <person name="Demolder J."/>
            <person name="Doira C."/>
            <person name="Dubois E."/>
            <person name="Dujon B."/>
            <person name="Duesterhoeft A."/>
            <person name="Erdmann D."/>
            <person name="Esteban M."/>
            <person name="Fabre F."/>
            <person name="Fairhead C."/>
            <person name="Faye G."/>
            <person name="Feldmann H."/>
            <person name="Fiers W."/>
            <person name="Francingues-Gaillard M.-C."/>
            <person name="Franco L."/>
            <person name="Frontali L."/>
            <person name="Fukuhara H."/>
            <person name="Fuller L.J."/>
            <person name="Galland P."/>
            <person name="Gent M.E."/>
            <person name="Gigot D."/>
            <person name="Gilliquet V."/>
            <person name="Glansdorff N."/>
            <person name="Goffeau A."/>
            <person name="Grenson M."/>
            <person name="Grisanti P."/>
            <person name="Grivell L.A."/>
            <person name="de Haan M."/>
            <person name="Haasemann M."/>
            <person name="Hatat D."/>
            <person name="Hoenicka J."/>
            <person name="Hegemann J.H."/>
            <person name="Herbert C.J."/>
            <person name="Hilger F."/>
            <person name="Hohmann S."/>
            <person name="Hollenberg C.P."/>
            <person name="Huse K."/>
            <person name="Iborra F."/>
            <person name="Indge K.J."/>
            <person name="Isono K."/>
            <person name="Jacq C."/>
            <person name="Jacquet M."/>
            <person name="James C.M."/>
            <person name="Jauniaux J.-C."/>
            <person name="Jia Y."/>
            <person name="Jimenez A."/>
            <person name="Kelly A."/>
            <person name="Kleinhans U."/>
            <person name="Kreisl P."/>
            <person name="Lanfranchi G."/>
            <person name="Lewis C."/>
            <person name="van der Linden C.G."/>
            <person name="Lucchini G."/>
            <person name="Lutzenkirchen K."/>
            <person name="Maat M.J."/>
            <person name="Mallet L."/>
            <person name="Mannhaupt G."/>
            <person name="Martegani E."/>
            <person name="Mathieu A."/>
            <person name="Maurer C.T.C."/>
            <person name="McConnell D."/>
            <person name="McKee R.A."/>
            <person name="Messenguy F."/>
            <person name="Mewes H.-W."/>
            <person name="Molemans F."/>
            <person name="Montague M.A."/>
            <person name="Muzi Falconi M."/>
            <person name="Navas L."/>
            <person name="Newlon C.S."/>
            <person name="Noone D."/>
            <person name="Pallier C."/>
            <person name="Panzeri L."/>
            <person name="Pearson B.M."/>
            <person name="Perea J."/>
            <person name="Philippsen P."/>
            <person name="Pierard A."/>
            <person name="Planta R.J."/>
            <person name="Plevani P."/>
            <person name="Poetsch B."/>
            <person name="Pohl F.M."/>
            <person name="Purnelle B."/>
            <person name="Ramezani Rad M."/>
            <person name="Rasmussen S.W."/>
            <person name="Raynal A."/>
            <person name="Remacha M.A."/>
            <person name="Richterich P."/>
            <person name="Roberts A.B."/>
            <person name="Rodriguez F."/>
            <person name="Sanz E."/>
            <person name="Schaaff-Gerstenschlaeger I."/>
            <person name="Scherens B."/>
            <person name="Schweitzer B."/>
            <person name="Shu Y."/>
            <person name="Skala J."/>
            <person name="Slonimski P.P."/>
            <person name="Sor F."/>
            <person name="Soustelle C."/>
            <person name="Spiegelberg R."/>
            <person name="Stateva L.I."/>
            <person name="Steensma H.Y."/>
            <person name="Steiner S."/>
            <person name="Thierry A."/>
            <person name="Thireos G."/>
            <person name="Tzermia M."/>
            <person name="Urrestarazu L.A."/>
            <person name="Valle G."/>
            <person name="Vetter I."/>
            <person name="van Vliet-Reedijk J.C."/>
            <person name="Voet M."/>
            <person name="Volckaert G."/>
            <person name="Vreken P."/>
            <person name="Wang H."/>
            <person name="Warmington J.R."/>
            <person name="von Wettstein D."/>
            <person name="Wicksteed B.L."/>
            <person name="Wilson C."/>
            <person name="Wurst H."/>
            <person name="Xu G."/>
            <person name="Yoshikawa A."/>
            <person name="Zimmermann F.K."/>
            <person name="Sgouros J.G."/>
        </authorList>
    </citation>
    <scope>NUCLEOTIDE SEQUENCE [LARGE SCALE GENOMIC DNA]</scope>
    <source>
        <strain>ATCC 204508 / S288c</strain>
    </source>
</reference>
<reference key="2">
    <citation type="journal article" date="2014" name="G3 (Bethesda)">
        <title>The reference genome sequence of Saccharomyces cerevisiae: Then and now.</title>
        <authorList>
            <person name="Engel S.R."/>
            <person name="Dietrich F.S."/>
            <person name="Fisk D.G."/>
            <person name="Binkley G."/>
            <person name="Balakrishnan R."/>
            <person name="Costanzo M.C."/>
            <person name="Dwight S.S."/>
            <person name="Hitz B.C."/>
            <person name="Karra K."/>
            <person name="Nash R.S."/>
            <person name="Weng S."/>
            <person name="Wong E.D."/>
            <person name="Lloyd P."/>
            <person name="Skrzypek M.S."/>
            <person name="Miyasato S.R."/>
            <person name="Simison M."/>
            <person name="Cherry J.M."/>
        </authorList>
    </citation>
    <scope>GENOME REANNOTATION</scope>
    <source>
        <strain>ATCC 204508 / S288c</strain>
    </source>
</reference>
<reference key="3">
    <citation type="submission" date="2001-06" db="EMBL/GenBank/DDBJ databases">
        <authorList>
            <person name="Valles G."/>
            <person name="Volckaerts G."/>
        </authorList>
    </citation>
    <scope>SEQUENCE REVISION TO 24</scope>
</reference>
<reference key="4">
    <citation type="journal article" date="2007" name="Genome Res.">
        <title>Approaching a complete repository of sequence-verified protein-encoding clones for Saccharomyces cerevisiae.</title>
        <authorList>
            <person name="Hu Y."/>
            <person name="Rolfs A."/>
            <person name="Bhullar B."/>
            <person name="Murthy T.V.S."/>
            <person name="Zhu C."/>
            <person name="Berger M.F."/>
            <person name="Camargo A.A."/>
            <person name="Kelley F."/>
            <person name="McCarron S."/>
            <person name="Jepson D."/>
            <person name="Richardson A."/>
            <person name="Raphael J."/>
            <person name="Moreira D."/>
            <person name="Taycher E."/>
            <person name="Zuo D."/>
            <person name="Mohr S."/>
            <person name="Kane M.F."/>
            <person name="Williamson J."/>
            <person name="Simpson A.J.G."/>
            <person name="Bulyk M.L."/>
            <person name="Harlow E."/>
            <person name="Marsischky G."/>
            <person name="Kolodner R.D."/>
            <person name="LaBaer J."/>
        </authorList>
    </citation>
    <scope>NUCLEOTIDE SEQUENCE [GENOMIC DNA]</scope>
    <source>
        <strain>ATCC 204508 / S288c</strain>
    </source>
</reference>
<protein>
    <recommendedName>
        <fullName>Putative uncharacterized protein YCL065W</fullName>
    </recommendedName>
</protein>
<feature type="chain" id="PRO_0000202555" description="Putative uncharacterized protein YCL065W">
    <location>
        <begin position="1"/>
        <end position="122"/>
    </location>
</feature>
<feature type="transmembrane region" description="Helical" evidence="1">
    <location>
        <begin position="21"/>
        <end position="40"/>
    </location>
</feature>
<feature type="transmembrane region" description="Helical" evidence="1">
    <location>
        <begin position="57"/>
        <end position="77"/>
    </location>
</feature>
<feature type="transmembrane region" description="Helical" evidence="1">
    <location>
        <begin position="94"/>
        <end position="114"/>
    </location>
</feature>
<sequence>MLKYVVTDIGKMCLYIWPYRVWSWRRLFIFRVLNVVSIAILFETPHRLALVPNVCLYTHMAIPLSTCLFCLCLCICIKYDITQTQANNQRNLSLLFSVFHLVFSTIALSIYCIYQILILVKH</sequence>